<dbReference type="EMBL" id="L31957">
    <property type="protein sequence ID" value="AAC42046.1"/>
    <property type="molecule type" value="mRNA"/>
</dbReference>
<dbReference type="PIR" id="A55626">
    <property type="entry name" value="A55626"/>
</dbReference>
<dbReference type="RefSeq" id="NP_001268256.1">
    <property type="nucleotide sequence ID" value="NM_001281327.1"/>
</dbReference>
<dbReference type="SMR" id="P53988"/>
<dbReference type="STRING" id="10036.ENSMAUP00000014089"/>
<dbReference type="GeneID" id="101835011"/>
<dbReference type="KEGG" id="maua:101835011"/>
<dbReference type="CTD" id="9194"/>
<dbReference type="eggNOG" id="KOG2504">
    <property type="taxonomic scope" value="Eukaryota"/>
</dbReference>
<dbReference type="OrthoDB" id="6499973at2759"/>
<dbReference type="Proteomes" id="UP000189706">
    <property type="component" value="Unplaced"/>
</dbReference>
<dbReference type="GO" id="GO:0016323">
    <property type="term" value="C:basolateral plasma membrane"/>
    <property type="evidence" value="ECO:0000314"/>
    <property type="project" value="UniProtKB"/>
</dbReference>
<dbReference type="GO" id="GO:0005737">
    <property type="term" value="C:cytoplasm"/>
    <property type="evidence" value="ECO:0007669"/>
    <property type="project" value="UniProtKB-SubCell"/>
</dbReference>
<dbReference type="GO" id="GO:0005886">
    <property type="term" value="C:plasma membrane"/>
    <property type="evidence" value="ECO:0000250"/>
    <property type="project" value="UniProtKB"/>
</dbReference>
<dbReference type="GO" id="GO:0042802">
    <property type="term" value="F:identical protein binding"/>
    <property type="evidence" value="ECO:0000250"/>
    <property type="project" value="UniProtKB"/>
</dbReference>
<dbReference type="GO" id="GO:0015129">
    <property type="term" value="F:lactate transmembrane transporter activity"/>
    <property type="evidence" value="ECO:0000250"/>
    <property type="project" value="UniProtKB"/>
</dbReference>
<dbReference type="GO" id="GO:0050833">
    <property type="term" value="F:pyruvate transmembrane transporter activity"/>
    <property type="evidence" value="ECO:0000314"/>
    <property type="project" value="UniProtKB"/>
</dbReference>
<dbReference type="GO" id="GO:0015293">
    <property type="term" value="F:symporter activity"/>
    <property type="evidence" value="ECO:0000314"/>
    <property type="project" value="UniProtKB"/>
</dbReference>
<dbReference type="GO" id="GO:0035873">
    <property type="term" value="P:lactate transmembrane transport"/>
    <property type="evidence" value="ECO:0000250"/>
    <property type="project" value="UniProtKB"/>
</dbReference>
<dbReference type="GO" id="GO:0035879">
    <property type="term" value="P:plasma membrane lactate transport"/>
    <property type="evidence" value="ECO:0007669"/>
    <property type="project" value="TreeGrafter"/>
</dbReference>
<dbReference type="GO" id="GO:1901475">
    <property type="term" value="P:pyruvate transmembrane transport"/>
    <property type="evidence" value="ECO:0000314"/>
    <property type="project" value="UniProtKB"/>
</dbReference>
<dbReference type="FunFam" id="1.20.1250.20:FF:000030">
    <property type="entry name" value="monocarboxylate transporter 1 isoform X1"/>
    <property type="match status" value="1"/>
</dbReference>
<dbReference type="Gene3D" id="1.20.1250.20">
    <property type="entry name" value="MFS general substrate transporter like domains"/>
    <property type="match status" value="1"/>
</dbReference>
<dbReference type="InterPro" id="IPR004743">
    <property type="entry name" value="MCT"/>
</dbReference>
<dbReference type="InterPro" id="IPR011701">
    <property type="entry name" value="MFS"/>
</dbReference>
<dbReference type="InterPro" id="IPR020846">
    <property type="entry name" value="MFS_dom"/>
</dbReference>
<dbReference type="InterPro" id="IPR036259">
    <property type="entry name" value="MFS_trans_sf"/>
</dbReference>
<dbReference type="InterPro" id="IPR050327">
    <property type="entry name" value="Proton-linked_MCT"/>
</dbReference>
<dbReference type="NCBIfam" id="TIGR00892">
    <property type="entry name" value="2A0113"/>
    <property type="match status" value="1"/>
</dbReference>
<dbReference type="PANTHER" id="PTHR11360">
    <property type="entry name" value="MONOCARBOXYLATE TRANSPORTER"/>
    <property type="match status" value="1"/>
</dbReference>
<dbReference type="PANTHER" id="PTHR11360:SF25">
    <property type="entry name" value="MONOCARBOXYLATE TRANSPORTER 2"/>
    <property type="match status" value="1"/>
</dbReference>
<dbReference type="Pfam" id="PF07690">
    <property type="entry name" value="MFS_1"/>
    <property type="match status" value="1"/>
</dbReference>
<dbReference type="SUPFAM" id="SSF103473">
    <property type="entry name" value="MFS general substrate transporter"/>
    <property type="match status" value="1"/>
</dbReference>
<dbReference type="PROSITE" id="PS50850">
    <property type="entry name" value="MFS"/>
    <property type="match status" value="1"/>
</dbReference>
<proteinExistence type="evidence at protein level"/>
<organism>
    <name type="scientific">Mesocricetus auratus</name>
    <name type="common">Golden hamster</name>
    <dbReference type="NCBI Taxonomy" id="10036"/>
    <lineage>
        <taxon>Eukaryota</taxon>
        <taxon>Metazoa</taxon>
        <taxon>Chordata</taxon>
        <taxon>Craniata</taxon>
        <taxon>Vertebrata</taxon>
        <taxon>Euteleostomi</taxon>
        <taxon>Mammalia</taxon>
        <taxon>Eutheria</taxon>
        <taxon>Euarchontoglires</taxon>
        <taxon>Glires</taxon>
        <taxon>Rodentia</taxon>
        <taxon>Myomorpha</taxon>
        <taxon>Muroidea</taxon>
        <taxon>Cricetidae</taxon>
        <taxon>Cricetinae</taxon>
        <taxon>Mesocricetus</taxon>
    </lineage>
</organism>
<comment type="function">
    <text evidence="1 6">Proton-coupled monocarboxylate symporter (PubMed:7829520). Catalyzes the rapid transport across the plasma membrane of monocarboxylates such as L-lactate, pyruvate and ketone bodies, acetoacetate, beta-hydroxybutyrate and acetate. Dimerization is functionally required and both subunits work cooperatively in transporting substrate (By similarity).</text>
</comment>
<comment type="catalytic activity">
    <reaction evidence="6">
        <text>pyruvate(out) + H(+)(out) = pyruvate(in) + H(+)(in)</text>
        <dbReference type="Rhea" id="RHEA:64720"/>
        <dbReference type="ChEBI" id="CHEBI:15361"/>
        <dbReference type="ChEBI" id="CHEBI:15378"/>
    </reaction>
    <physiologicalReaction direction="left-to-right" evidence="1">
        <dbReference type="Rhea" id="RHEA:64721"/>
    </physiologicalReaction>
    <physiologicalReaction direction="right-to-left" evidence="1">
        <dbReference type="Rhea" id="RHEA:64722"/>
    </physiologicalReaction>
</comment>
<comment type="catalytic activity">
    <reaction evidence="3">
        <text>3-methyl-2-oxobutanoate(out) + H(+)(out) = 3-methyl-2-oxobutanoate(in) + H(+)(in)</text>
        <dbReference type="Rhea" id="RHEA:71783"/>
        <dbReference type="ChEBI" id="CHEBI:11851"/>
        <dbReference type="ChEBI" id="CHEBI:15378"/>
    </reaction>
</comment>
<comment type="catalytic activity">
    <reaction evidence="3">
        <text>(S)-lactate(in) + H(+)(in) = (S)-lactate(out) + H(+)(out)</text>
        <dbReference type="Rhea" id="RHEA:29415"/>
        <dbReference type="ChEBI" id="CHEBI:15378"/>
        <dbReference type="ChEBI" id="CHEBI:16651"/>
    </reaction>
</comment>
<comment type="catalytic activity">
    <reaction evidence="3">
        <text>acetoacetate(out) + H(+)(out) = acetoacetate(in) + H(+)(in)</text>
        <dbReference type="Rhea" id="RHEA:71775"/>
        <dbReference type="ChEBI" id="CHEBI:13705"/>
        <dbReference type="ChEBI" id="CHEBI:15378"/>
    </reaction>
</comment>
<comment type="catalytic activity">
    <reaction evidence="3">
        <text>(R)-3-hydroxybutanoate(out) + H(+)(out) = (R)-3-hydroxybutanoate(in) + H(+)(in)</text>
        <dbReference type="Rhea" id="RHEA:71795"/>
        <dbReference type="ChEBI" id="CHEBI:10983"/>
        <dbReference type="ChEBI" id="CHEBI:15378"/>
    </reaction>
</comment>
<comment type="catalytic activity">
    <reaction evidence="3">
        <text>4-methyl-2-oxopentanoate(out) + H(+)(out) = 4-methyl-2-oxopentanoate(in) + H(+)(in)</text>
        <dbReference type="Rhea" id="RHEA:71779"/>
        <dbReference type="ChEBI" id="CHEBI:15378"/>
        <dbReference type="ChEBI" id="CHEBI:17865"/>
    </reaction>
</comment>
<comment type="catalytic activity">
    <reaction evidence="3">
        <text>(S)-3-hydroxybutanoate(out) + H(+)(out) = (S)-3-hydroxybutanoate(in) + H(+)(in)</text>
        <dbReference type="Rhea" id="RHEA:71871"/>
        <dbReference type="ChEBI" id="CHEBI:11047"/>
        <dbReference type="ChEBI" id="CHEBI:15378"/>
    </reaction>
</comment>
<comment type="activity regulation">
    <text evidence="1">Transport activity exhibits steep dependence on substrate concentration. Substrate concentration sensitivity of SLC16A7 arises from the strong inter-subunit cooperativity of the SLC16A7 dimer during transport. Inhibited by AR-C155858.</text>
</comment>
<comment type="biophysicochemical properties">
    <kinetics>
        <KM evidence="6">0.8 mM for pyruvate</KM>
    </kinetics>
</comment>
<comment type="subunit">
    <text evidence="1 2 3">Homodimer (By similarity). Interacts with GRID2IP (By similarity). Interacts with EMB; interaction mediates SLC16A7 targeting to the plasma membrane (By similarity). Interacts with isoform 2 of BSG (By similarity).</text>
</comment>
<comment type="subcellular location">
    <subcellularLocation>
        <location evidence="6">Cell membrane</location>
        <topology evidence="1">Multi-pass membrane protein</topology>
    </subcellularLocation>
    <subcellularLocation>
        <location evidence="6">Basolateral cell membrane</location>
        <topology evidence="1">Multi-pass membrane protein</topology>
    </subcellularLocation>
    <subcellularLocation>
        <location evidence="2">Cytoplasm</location>
    </subcellularLocation>
    <text evidence="2 3">Requires the ancillary protein, EMB for plasma membrane localization (By similarity). Colocalizes with BSG in spermatozoa. Detected in the cytoplasm of Sertoli cells (By similarity).</text>
</comment>
<comment type="tissue specificity">
    <text evidence="6">Abundant on the surface of hepatocytes. Present on parietal cells of the oxyntic gland of the stomach, on the basolateral surface of epithelial cells in the collecting ducts of the kidney, on sperm tails throughout the epididymis. Expressed in mitochondria-rich skeletal muscle fibers and cardiac myocytes (at protein level).</text>
</comment>
<comment type="similarity">
    <text evidence="7">Belongs to the major facilitator superfamily. Monocarboxylate porter (TC 2.A.1.13) family.</text>
</comment>
<feature type="chain" id="PRO_0000211386" description="Monocarboxylate transporter 2">
    <location>
        <begin position="1"/>
        <end position="484"/>
    </location>
</feature>
<feature type="topological domain" description="Cytoplasmic" evidence="7">
    <location>
        <begin position="1"/>
        <end position="16"/>
    </location>
</feature>
<feature type="transmembrane region" description="Helical; Name=1" evidence="4">
    <location>
        <begin position="17"/>
        <end position="37"/>
    </location>
</feature>
<feature type="topological domain" description="Extracellular" evidence="7">
    <location>
        <begin position="38"/>
        <end position="60"/>
    </location>
</feature>
<feature type="transmembrane region" description="Helical; Name=2" evidence="4">
    <location>
        <begin position="61"/>
        <end position="81"/>
    </location>
</feature>
<feature type="topological domain" description="Cytoplasmic" evidence="7">
    <location>
        <begin position="82"/>
        <end position="87"/>
    </location>
</feature>
<feature type="transmembrane region" description="Helical; Name=3" evidence="4">
    <location>
        <begin position="88"/>
        <end position="108"/>
    </location>
</feature>
<feature type="topological domain" description="Extracellular" evidence="7">
    <location>
        <begin position="109"/>
        <end position="116"/>
    </location>
</feature>
<feature type="transmembrane region" description="Helical; Name=4" evidence="4">
    <location>
        <begin position="117"/>
        <end position="137"/>
    </location>
</feature>
<feature type="topological domain" description="Cytoplasmic" evidence="7">
    <location>
        <begin position="138"/>
        <end position="144"/>
    </location>
</feature>
<feature type="transmembrane region" description="Helical; Name=5" evidence="4">
    <location>
        <begin position="145"/>
        <end position="165"/>
    </location>
</feature>
<feature type="topological domain" description="Extracellular" evidence="7">
    <location>
        <begin position="166"/>
        <end position="174"/>
    </location>
</feature>
<feature type="transmembrane region" description="Helical; Name=6" evidence="4">
    <location>
        <begin position="175"/>
        <end position="195"/>
    </location>
</feature>
<feature type="topological domain" description="Cytoplasmic" evidence="7">
    <location>
        <begin position="196"/>
        <end position="245"/>
    </location>
</feature>
<feature type="transmembrane region" description="Helical; Name=7" evidence="4">
    <location>
        <begin position="246"/>
        <end position="266"/>
    </location>
</feature>
<feature type="topological domain" description="Extracellular" evidence="7">
    <location>
        <begin position="267"/>
        <end position="282"/>
    </location>
</feature>
<feature type="transmembrane region" description="Helical; Name=8" evidence="4">
    <location>
        <begin position="283"/>
        <end position="303"/>
    </location>
</feature>
<feature type="topological domain" description="Cytoplasmic" evidence="7">
    <location>
        <begin position="304"/>
        <end position="311"/>
    </location>
</feature>
<feature type="transmembrane region" description="Helical; Name=9" evidence="4">
    <location>
        <begin position="312"/>
        <end position="332"/>
    </location>
</feature>
<feature type="topological domain" description="Extracellular" evidence="7">
    <location>
        <begin position="333"/>
        <end position="337"/>
    </location>
</feature>
<feature type="transmembrane region" description="Helical; Name=10" evidence="4">
    <location>
        <begin position="338"/>
        <end position="358"/>
    </location>
</feature>
<feature type="topological domain" description="Cytoplasmic" evidence="7">
    <location>
        <begin position="359"/>
        <end position="372"/>
    </location>
</feature>
<feature type="transmembrane region" description="Helical; Name=11" evidence="4">
    <location>
        <begin position="373"/>
        <end position="393"/>
    </location>
</feature>
<feature type="topological domain" description="Extracellular" evidence="7">
    <location>
        <begin position="394"/>
        <end position="405"/>
    </location>
</feature>
<feature type="transmembrane region" description="Helical; Name=12" evidence="4">
    <location>
        <begin position="406"/>
        <end position="426"/>
    </location>
</feature>
<feature type="topological domain" description="Cytoplasmic" evidence="7">
    <location>
        <begin position="427"/>
        <end position="484"/>
    </location>
</feature>
<feature type="region of interest" description="Disordered" evidence="5">
    <location>
        <begin position="201"/>
        <end position="224"/>
    </location>
</feature>
<feature type="region of interest" description="Disordered" evidence="5">
    <location>
        <begin position="437"/>
        <end position="484"/>
    </location>
</feature>
<feature type="compositionally biased region" description="Basic and acidic residues" evidence="5">
    <location>
        <begin position="449"/>
        <end position="465"/>
    </location>
</feature>
<feature type="compositionally biased region" description="Basic and acidic residues" evidence="5">
    <location>
        <begin position="475"/>
        <end position="484"/>
    </location>
</feature>
<feature type="site" description="May be protonated during monocarboxylate transport" evidence="1">
    <location>
        <position position="292"/>
    </location>
</feature>
<gene>
    <name type="primary">SLC16A7</name>
    <name type="synonym">MCT2</name>
</gene>
<name>MOT2_MESAU</name>
<sequence length="484" mass="52832">MPSETAVPPPHPIPPDGGWGWVVVGAAFISIGFSYAFPKAVTVFFKDIQQIFQASYSEIAWISSIMLAVMYAGGPISSVLVNNYGSRPVVIIGGLLCCTGMILASFSNSVLELYLTIGFIGGLGLAFNLQPALTIIGKYFYRRRPMANGLAMAGSPVFLSSLAPFNQYLFNSYGWKGSFLILGGIFLHSCVAGCLMRPVQTSPRKSKSKSKVGSRQDGSMKKASKVSTAEKINRFLDFSLFKHRGFLIYLSGNVIMFLGFFAPIIFLAPYAKDKGVDEYNAALLLSVMAFVDMFARPTGGLIANSKLIRPRIQYFFSFAIVFTGICHLLCPLADTYPALVVYSIFFGYGFGSVSSVLFETLMDLVGPARFSSAVGLATIVECCPVLLGPPLAGKLVDKTKDYKYMYIASGTIVVISGIYLFIGNAINYRLLAKERKREKARKKKSATHPSRESEALSRSKQDDVSVKVSNPHNSPSDRERESNI</sequence>
<accession>P53988</accession>
<protein>
    <recommendedName>
        <fullName>Monocarboxylate transporter 2</fullName>
        <shortName>MCT 2</shortName>
    </recommendedName>
    <alternativeName>
        <fullName>Solute carrier family 16 member 7</fullName>
    </alternativeName>
</protein>
<reference key="1">
    <citation type="journal article" date="1995" name="J. Biol. Chem.">
        <title>cDNA cloning of MCT2, a second monocarboxylate transporter expressed in different cells than MCT1.</title>
        <authorList>
            <person name="Garcia C.K."/>
            <person name="Brown M.S."/>
            <person name="Pathak R.K."/>
            <person name="Goldstein J.L."/>
        </authorList>
    </citation>
    <scope>NUCLEOTIDE SEQUENCE [MRNA]</scope>
    <scope>FUNCTION</scope>
    <scope>TRANSPORTER ACTIVITY</scope>
    <scope>SUBCELLULAR LOCATION</scope>
    <scope>TISSUE SPECIFICITY</scope>
    <scope>BIOPHYSICOCHEMICAL PROPERTIES</scope>
    <source>
        <tissue>Liver</tissue>
    </source>
</reference>
<evidence type="ECO:0000250" key="1">
    <source>
        <dbReference type="UniProtKB" id="O60669"/>
    </source>
</evidence>
<evidence type="ECO:0000250" key="2">
    <source>
        <dbReference type="UniProtKB" id="O70451"/>
    </source>
</evidence>
<evidence type="ECO:0000250" key="3">
    <source>
        <dbReference type="UniProtKB" id="Q63344"/>
    </source>
</evidence>
<evidence type="ECO:0000255" key="4"/>
<evidence type="ECO:0000256" key="5">
    <source>
        <dbReference type="SAM" id="MobiDB-lite"/>
    </source>
</evidence>
<evidence type="ECO:0000269" key="6">
    <source>
    </source>
</evidence>
<evidence type="ECO:0000305" key="7"/>
<keyword id="KW-1003">Cell membrane</keyword>
<keyword id="KW-0963">Cytoplasm</keyword>
<keyword id="KW-0472">Membrane</keyword>
<keyword id="KW-1185">Reference proteome</keyword>
<keyword id="KW-0769">Symport</keyword>
<keyword id="KW-0812">Transmembrane</keyword>
<keyword id="KW-1133">Transmembrane helix</keyword>
<keyword id="KW-0813">Transport</keyword>